<comment type="function">
    <text>Calcium-dependent, calmodulin-stimulated protein phosphatase. This subunit may have a role in the calmodulin activation of calcineurin. Appears to be involved in cytokinesis, mating, transport, nuclear and spindle pole body positioning, and cell shape.</text>
</comment>
<comment type="catalytic activity">
    <reaction>
        <text>O-phospho-L-seryl-[protein] + H2O = L-seryl-[protein] + phosphate</text>
        <dbReference type="Rhea" id="RHEA:20629"/>
        <dbReference type="Rhea" id="RHEA-COMP:9863"/>
        <dbReference type="Rhea" id="RHEA-COMP:11604"/>
        <dbReference type="ChEBI" id="CHEBI:15377"/>
        <dbReference type="ChEBI" id="CHEBI:29999"/>
        <dbReference type="ChEBI" id="CHEBI:43474"/>
        <dbReference type="ChEBI" id="CHEBI:83421"/>
        <dbReference type="EC" id="3.1.3.16"/>
    </reaction>
</comment>
<comment type="catalytic activity">
    <reaction>
        <text>O-phospho-L-threonyl-[protein] + H2O = L-threonyl-[protein] + phosphate</text>
        <dbReference type="Rhea" id="RHEA:47004"/>
        <dbReference type="Rhea" id="RHEA-COMP:11060"/>
        <dbReference type="Rhea" id="RHEA-COMP:11605"/>
        <dbReference type="ChEBI" id="CHEBI:15377"/>
        <dbReference type="ChEBI" id="CHEBI:30013"/>
        <dbReference type="ChEBI" id="CHEBI:43474"/>
        <dbReference type="ChEBI" id="CHEBI:61977"/>
        <dbReference type="EC" id="3.1.3.16"/>
    </reaction>
</comment>
<comment type="cofactor">
    <cofactor evidence="1">
        <name>Fe(3+)</name>
        <dbReference type="ChEBI" id="CHEBI:29034"/>
    </cofactor>
    <text evidence="1">Binds 1 Fe(3+) ion per subunit.</text>
</comment>
<comment type="cofactor">
    <cofactor evidence="1">
        <name>Zn(2+)</name>
        <dbReference type="ChEBI" id="CHEBI:29105"/>
    </cofactor>
    <text evidence="1">Binds 1 zinc ion per subunit.</text>
</comment>
<comment type="subunit">
    <text>Composed of two components (A and B), the A component is the catalytic subunit and the B component confers calcium sensitivity.</text>
</comment>
<comment type="similarity">
    <text evidence="3">Belongs to the PPP phosphatase family. PP-2B subfamily.</text>
</comment>
<sequence>MTSGPHNLEDPIVRAIRQKNQAPSHDFTIFVQEDGSSVSTLDRVVKNVQAPATYIPTDVEFFDINEPDKPDLHFLRNHFIREGRLSEEQTLYIIKKATEILKSEDNLIEVDAPVTVCGDIHGQYYDLMKLFEVGGNPANTQYLFLGDYVDRGYFSIECLLYLWALKIWYPKTLWLLRGNHECAHLTDYFTFKLECTHKYNIKVYEACLQSFNALPLAAIMNKQFLCVHGGLSPELHTLNDIRMINRFCEPPTHGLMCDLLWSDPLEDFGSEKSNKHFIHNNVRGCSYFYSYQAVCTFLENNNLLSVIRAHEAQDVGYRMYRKTKTTGFPSLMTIFSAPNYLDVYNNKAAVLKYENNVMNIRQFNCSPHPYWLPNFMDVFTWSLPFVGEKVSEMLISMLNICSKEELYETDLKESAPTQHKQPAPSENENKADQEIDIEARRQIIKNKIMAIGRISRVFSVLREERESVSELKNVSGTQRLPAGTLMLGAEGIKNAINSFDDARKLDIQNERLPPSNSRRRSTDLKAFEEVMNSSEDDTSIDHLVERFADKKSSL</sequence>
<proteinExistence type="inferred from homology"/>
<name>PP2B_SCHPO</name>
<keyword id="KW-0112">Calmodulin-binding</keyword>
<keyword id="KW-0133">Cell shape</keyword>
<keyword id="KW-0378">Hydrolase</keyword>
<keyword id="KW-0408">Iron</keyword>
<keyword id="KW-0464">Manganese</keyword>
<keyword id="KW-0479">Metal-binding</keyword>
<keyword id="KW-0904">Protein phosphatase</keyword>
<keyword id="KW-1185">Reference proteome</keyword>
<keyword id="KW-0862">Zinc</keyword>
<reference key="1">
    <citation type="journal article" date="1994" name="J. Cell Sci.">
        <title>A calcineurin-like gene ppb1+ in fission yeast: mutant defects in cytokinesis, cell polarity, mating and spindle pole body positioning.</title>
        <authorList>
            <person name="Yoshida T."/>
            <person name="Toda T."/>
            <person name="Yanagida M."/>
        </authorList>
    </citation>
    <scope>NUCLEOTIDE SEQUENCE [GENOMIC DNA]</scope>
</reference>
<reference key="2">
    <citation type="journal article" date="2002" name="Nature">
        <title>The genome sequence of Schizosaccharomyces pombe.</title>
        <authorList>
            <person name="Wood V."/>
            <person name="Gwilliam R."/>
            <person name="Rajandream M.A."/>
            <person name="Lyne M.H."/>
            <person name="Lyne R."/>
            <person name="Stewart A."/>
            <person name="Sgouros J.G."/>
            <person name="Peat N."/>
            <person name="Hayles J."/>
            <person name="Baker S.G."/>
            <person name="Basham D."/>
            <person name="Bowman S."/>
            <person name="Brooks K."/>
            <person name="Brown D."/>
            <person name="Brown S."/>
            <person name="Chillingworth T."/>
            <person name="Churcher C.M."/>
            <person name="Collins M."/>
            <person name="Connor R."/>
            <person name="Cronin A."/>
            <person name="Davis P."/>
            <person name="Feltwell T."/>
            <person name="Fraser A."/>
            <person name="Gentles S."/>
            <person name="Goble A."/>
            <person name="Hamlin N."/>
            <person name="Harris D.E."/>
            <person name="Hidalgo J."/>
            <person name="Hodgson G."/>
            <person name="Holroyd S."/>
            <person name="Hornsby T."/>
            <person name="Howarth S."/>
            <person name="Huckle E.J."/>
            <person name="Hunt S."/>
            <person name="Jagels K."/>
            <person name="James K.D."/>
            <person name="Jones L."/>
            <person name="Jones M."/>
            <person name="Leather S."/>
            <person name="McDonald S."/>
            <person name="McLean J."/>
            <person name="Mooney P."/>
            <person name="Moule S."/>
            <person name="Mungall K.L."/>
            <person name="Murphy L.D."/>
            <person name="Niblett D."/>
            <person name="Odell C."/>
            <person name="Oliver K."/>
            <person name="O'Neil S."/>
            <person name="Pearson D."/>
            <person name="Quail M.A."/>
            <person name="Rabbinowitsch E."/>
            <person name="Rutherford K.M."/>
            <person name="Rutter S."/>
            <person name="Saunders D."/>
            <person name="Seeger K."/>
            <person name="Sharp S."/>
            <person name="Skelton J."/>
            <person name="Simmonds M.N."/>
            <person name="Squares R."/>
            <person name="Squares S."/>
            <person name="Stevens K."/>
            <person name="Taylor K."/>
            <person name="Taylor R.G."/>
            <person name="Tivey A."/>
            <person name="Walsh S.V."/>
            <person name="Warren T."/>
            <person name="Whitehead S."/>
            <person name="Woodward J.R."/>
            <person name="Volckaert G."/>
            <person name="Aert R."/>
            <person name="Robben J."/>
            <person name="Grymonprez B."/>
            <person name="Weltjens I."/>
            <person name="Vanstreels E."/>
            <person name="Rieger M."/>
            <person name="Schaefer M."/>
            <person name="Mueller-Auer S."/>
            <person name="Gabel C."/>
            <person name="Fuchs M."/>
            <person name="Duesterhoeft A."/>
            <person name="Fritzc C."/>
            <person name="Holzer E."/>
            <person name="Moestl D."/>
            <person name="Hilbert H."/>
            <person name="Borzym K."/>
            <person name="Langer I."/>
            <person name="Beck A."/>
            <person name="Lehrach H."/>
            <person name="Reinhardt R."/>
            <person name="Pohl T.M."/>
            <person name="Eger P."/>
            <person name="Zimmermann W."/>
            <person name="Wedler H."/>
            <person name="Wambutt R."/>
            <person name="Purnelle B."/>
            <person name="Goffeau A."/>
            <person name="Cadieu E."/>
            <person name="Dreano S."/>
            <person name="Gloux S."/>
            <person name="Lelaure V."/>
            <person name="Mottier S."/>
            <person name="Galibert F."/>
            <person name="Aves S.J."/>
            <person name="Xiang Z."/>
            <person name="Hunt C."/>
            <person name="Moore K."/>
            <person name="Hurst S.M."/>
            <person name="Lucas M."/>
            <person name="Rochet M."/>
            <person name="Gaillardin C."/>
            <person name="Tallada V.A."/>
            <person name="Garzon A."/>
            <person name="Thode G."/>
            <person name="Daga R.R."/>
            <person name="Cruzado L."/>
            <person name="Jimenez J."/>
            <person name="Sanchez M."/>
            <person name="del Rey F."/>
            <person name="Benito J."/>
            <person name="Dominguez A."/>
            <person name="Revuelta J.L."/>
            <person name="Moreno S."/>
            <person name="Armstrong J."/>
            <person name="Forsburg S.L."/>
            <person name="Cerutti L."/>
            <person name="Lowe T."/>
            <person name="McCombie W.R."/>
            <person name="Paulsen I."/>
            <person name="Potashkin J."/>
            <person name="Shpakovski G.V."/>
            <person name="Ussery D."/>
            <person name="Barrell B.G."/>
            <person name="Nurse P."/>
        </authorList>
    </citation>
    <scope>NUCLEOTIDE SEQUENCE [LARGE SCALE GENOMIC DNA]</scope>
    <source>
        <strain>972 / ATCC 24843</strain>
    </source>
</reference>
<protein>
    <recommendedName>
        <fullName>Serine/threonine-protein phosphatase 2B catalytic subunit</fullName>
        <ecNumber>3.1.3.16</ecNumber>
    </recommendedName>
</protein>
<feature type="chain" id="PRO_0000058835" description="Serine/threonine-protein phosphatase 2B catalytic subunit">
    <location>
        <begin position="1"/>
        <end position="554"/>
    </location>
</feature>
<feature type="region of interest" description="Disordered" evidence="2">
    <location>
        <begin position="411"/>
        <end position="433"/>
    </location>
</feature>
<feature type="compositionally biased region" description="Polar residues" evidence="2">
    <location>
        <begin position="415"/>
        <end position="426"/>
    </location>
</feature>
<feature type="active site" description="Proton donor" evidence="1">
    <location>
        <position position="180"/>
    </location>
</feature>
<feature type="binding site" evidence="1">
    <location>
        <position position="119"/>
    </location>
    <ligand>
        <name>Fe cation</name>
        <dbReference type="ChEBI" id="CHEBI:24875"/>
    </ligand>
</feature>
<feature type="binding site" evidence="1">
    <location>
        <position position="121"/>
    </location>
    <ligand>
        <name>Fe cation</name>
        <dbReference type="ChEBI" id="CHEBI:24875"/>
    </ligand>
</feature>
<feature type="binding site" evidence="1">
    <location>
        <position position="147"/>
    </location>
    <ligand>
        <name>Fe cation</name>
        <dbReference type="ChEBI" id="CHEBI:24875"/>
    </ligand>
</feature>
<feature type="binding site" evidence="1">
    <location>
        <position position="147"/>
    </location>
    <ligand>
        <name>Zn(2+)</name>
        <dbReference type="ChEBI" id="CHEBI:29105"/>
    </ligand>
</feature>
<feature type="binding site" evidence="1">
    <location>
        <position position="179"/>
    </location>
    <ligand>
        <name>Zn(2+)</name>
        <dbReference type="ChEBI" id="CHEBI:29105"/>
    </ligand>
</feature>
<feature type="binding site" evidence="1">
    <location>
        <position position="228"/>
    </location>
    <ligand>
        <name>Zn(2+)</name>
        <dbReference type="ChEBI" id="CHEBI:29105"/>
    </ligand>
</feature>
<feature type="binding site" evidence="1">
    <location>
        <position position="310"/>
    </location>
    <ligand>
        <name>Zn(2+)</name>
        <dbReference type="ChEBI" id="CHEBI:29105"/>
    </ligand>
</feature>
<feature type="sequence conflict" description="In Ref. 1; BAA06081." evidence="3" ref="1">
    <original>I</original>
    <variation>T</variation>
    <location>
        <position position="12"/>
    </location>
</feature>
<feature type="sequence conflict" description="In Ref. 1; BAA06081." evidence="3" ref="1">
    <original>KL</original>
    <variation>EI</variation>
    <location>
        <begin position="129"/>
        <end position="130"/>
    </location>
</feature>
<gene>
    <name type="primary">ppb1</name>
    <name type="ORF">SPBC1346.01c</name>
    <name type="ORF">SPBP4H10.04</name>
</gene>
<evidence type="ECO:0000250" key="1"/>
<evidence type="ECO:0000256" key="2">
    <source>
        <dbReference type="SAM" id="MobiDB-lite"/>
    </source>
</evidence>
<evidence type="ECO:0000305" key="3"/>
<accession>Q12705</accession>
<accession>Q9P7E4</accession>
<dbReference type="EC" id="3.1.3.16"/>
<dbReference type="EMBL" id="D28955">
    <property type="protein sequence ID" value="BAA06081.1"/>
    <property type="molecule type" value="Genomic_DNA"/>
</dbReference>
<dbReference type="EMBL" id="CU329671">
    <property type="protein sequence ID" value="CAB83162.1"/>
    <property type="molecule type" value="Genomic_DNA"/>
</dbReference>
<dbReference type="PIR" id="T45137">
    <property type="entry name" value="T45137"/>
</dbReference>
<dbReference type="PIR" id="T50310">
    <property type="entry name" value="T50310"/>
</dbReference>
<dbReference type="RefSeq" id="NP_596178.1">
    <property type="nucleotide sequence ID" value="NM_001022097.2"/>
</dbReference>
<dbReference type="SMR" id="Q12705"/>
<dbReference type="BioGRID" id="276568">
    <property type="interactions" value="48"/>
</dbReference>
<dbReference type="ComplexPortal" id="CPX-597">
    <property type="entry name" value="Calcineurin complex"/>
</dbReference>
<dbReference type="FunCoup" id="Q12705">
    <property type="interactions" value="181"/>
</dbReference>
<dbReference type="STRING" id="284812.Q12705"/>
<dbReference type="iPTMnet" id="Q12705"/>
<dbReference type="PaxDb" id="4896-SPBP4H10.04.1"/>
<dbReference type="EnsemblFungi" id="SPBP4H10.04.1">
    <property type="protein sequence ID" value="SPBP4H10.04.1:pep"/>
    <property type="gene ID" value="SPBP4H10.04"/>
</dbReference>
<dbReference type="GeneID" id="2540024"/>
<dbReference type="KEGG" id="spo:2540024"/>
<dbReference type="PomBase" id="SPBP4H10.04">
    <property type="gene designation" value="ppb1"/>
</dbReference>
<dbReference type="VEuPathDB" id="FungiDB:SPBP4H10.04"/>
<dbReference type="eggNOG" id="KOG0375">
    <property type="taxonomic scope" value="Eukaryota"/>
</dbReference>
<dbReference type="HOGENOM" id="CLU_004962_6_0_1"/>
<dbReference type="InParanoid" id="Q12705"/>
<dbReference type="OMA" id="YPAACNF"/>
<dbReference type="PhylomeDB" id="Q12705"/>
<dbReference type="Reactome" id="R-SPO-2871809">
    <property type="pathway name" value="FCERI mediated Ca+2 mobilization"/>
</dbReference>
<dbReference type="Reactome" id="R-SPO-4086398">
    <property type="pathway name" value="Ca2+ pathway"/>
</dbReference>
<dbReference type="Reactome" id="R-SPO-5607763">
    <property type="pathway name" value="CLEC7A (Dectin-1) induces NFAT activation"/>
</dbReference>
<dbReference type="PRO" id="PR:Q12705"/>
<dbReference type="Proteomes" id="UP000002485">
    <property type="component" value="Chromosome II"/>
</dbReference>
<dbReference type="GO" id="GO:0005955">
    <property type="term" value="C:calcineurin complex"/>
    <property type="evidence" value="ECO:0000353"/>
    <property type="project" value="ComplexPortal"/>
</dbReference>
<dbReference type="GO" id="GO:0032153">
    <property type="term" value="C:cell division site"/>
    <property type="evidence" value="ECO:0000314"/>
    <property type="project" value="PomBase"/>
</dbReference>
<dbReference type="GO" id="GO:0005737">
    <property type="term" value="C:cytoplasm"/>
    <property type="evidence" value="ECO:0000314"/>
    <property type="project" value="PomBase"/>
</dbReference>
<dbReference type="GO" id="GO:0005829">
    <property type="term" value="C:cytosol"/>
    <property type="evidence" value="ECO:0007005"/>
    <property type="project" value="PomBase"/>
</dbReference>
<dbReference type="GO" id="GO:0110085">
    <property type="term" value="C:mitotic actomyosin contractile ring"/>
    <property type="evidence" value="ECO:0000314"/>
    <property type="project" value="PomBase"/>
</dbReference>
<dbReference type="GO" id="GO:0120105">
    <property type="term" value="C:mitotic actomyosin contractile ring, intermediate layer"/>
    <property type="evidence" value="ECO:0000314"/>
    <property type="project" value="PomBase"/>
</dbReference>
<dbReference type="GO" id="GO:0004723">
    <property type="term" value="F:calcium-dependent protein serine/threonine phosphatase activity"/>
    <property type="evidence" value="ECO:0000315"/>
    <property type="project" value="PomBase"/>
</dbReference>
<dbReference type="GO" id="GO:0005516">
    <property type="term" value="F:calmodulin binding"/>
    <property type="evidence" value="ECO:0000318"/>
    <property type="project" value="GO_Central"/>
</dbReference>
<dbReference type="GO" id="GO:0033192">
    <property type="term" value="F:calmodulin-dependent protein phosphatase activity"/>
    <property type="evidence" value="ECO:0000318"/>
    <property type="project" value="GO_Central"/>
</dbReference>
<dbReference type="GO" id="GO:0046872">
    <property type="term" value="F:metal ion binding"/>
    <property type="evidence" value="ECO:0007669"/>
    <property type="project" value="UniProtKB-KW"/>
</dbReference>
<dbReference type="GO" id="GO:0004721">
    <property type="term" value="F:phosphoprotein phosphatase activity"/>
    <property type="evidence" value="ECO:0000314"/>
    <property type="project" value="PomBase"/>
</dbReference>
<dbReference type="GO" id="GO:0097720">
    <property type="term" value="P:calcineurin-mediated signaling"/>
    <property type="evidence" value="ECO:0000315"/>
    <property type="project" value="PomBase"/>
</dbReference>
<dbReference type="GO" id="GO:0071277">
    <property type="term" value="P:cellular response to calcium ion"/>
    <property type="evidence" value="ECO:0000315"/>
    <property type="project" value="PomBase"/>
</dbReference>
<dbReference type="GO" id="GO:0031505">
    <property type="term" value="P:fungal-type cell wall organization"/>
    <property type="evidence" value="ECO:0000318"/>
    <property type="project" value="GO_Central"/>
</dbReference>
<dbReference type="GO" id="GO:0006874">
    <property type="term" value="P:intracellular calcium ion homeostasis"/>
    <property type="evidence" value="ECO:0000304"/>
    <property type="project" value="PomBase"/>
</dbReference>
<dbReference type="GO" id="GO:1905949">
    <property type="term" value="P:negative regulation of calcium ion import across plasma membrane"/>
    <property type="evidence" value="ECO:0000315"/>
    <property type="project" value="PomBase"/>
</dbReference>
<dbReference type="GO" id="GO:1903473">
    <property type="term" value="P:positive regulation of mitotic actomyosin contractile ring contraction"/>
    <property type="evidence" value="ECO:0000315"/>
    <property type="project" value="PomBase"/>
</dbReference>
<dbReference type="GO" id="GO:0140281">
    <property type="term" value="P:positive regulation of mitotic division septum assembly"/>
    <property type="evidence" value="ECO:0000316"/>
    <property type="project" value="PomBase"/>
</dbReference>
<dbReference type="GO" id="GO:0022604">
    <property type="term" value="P:regulation of cell morphogenesis"/>
    <property type="evidence" value="ECO:0000315"/>
    <property type="project" value="ComplexPortal"/>
</dbReference>
<dbReference type="GO" id="GO:0008360">
    <property type="term" value="P:regulation of cell shape"/>
    <property type="evidence" value="ECO:0007669"/>
    <property type="project" value="UniProtKB-KW"/>
</dbReference>
<dbReference type="GO" id="GO:0030100">
    <property type="term" value="P:regulation of endocytosis"/>
    <property type="evidence" value="ECO:0000266"/>
    <property type="project" value="PomBase"/>
</dbReference>
<dbReference type="GO" id="GO:1902412">
    <property type="term" value="P:regulation of mitotic cytokinesis"/>
    <property type="evidence" value="ECO:0000315"/>
    <property type="project" value="PomBase"/>
</dbReference>
<dbReference type="GO" id="GO:0031029">
    <property type="term" value="P:regulation of septation initiation signaling"/>
    <property type="evidence" value="ECO:0000315"/>
    <property type="project" value="PomBase"/>
</dbReference>
<dbReference type="CDD" id="cd07416">
    <property type="entry name" value="MPP_PP2B"/>
    <property type="match status" value="1"/>
</dbReference>
<dbReference type="FunFam" id="3.60.21.10:FF:000002">
    <property type="entry name" value="Serine/threonine-protein phosphatase"/>
    <property type="match status" value="1"/>
</dbReference>
<dbReference type="Gene3D" id="3.60.21.10">
    <property type="match status" value="1"/>
</dbReference>
<dbReference type="InterPro" id="IPR004843">
    <property type="entry name" value="Calcineurin-like_PHP_ApaH"/>
</dbReference>
<dbReference type="InterPro" id="IPR029052">
    <property type="entry name" value="Metallo-depent_PP-like"/>
</dbReference>
<dbReference type="InterPro" id="IPR041751">
    <property type="entry name" value="MPP_PP2B"/>
</dbReference>
<dbReference type="InterPro" id="IPR043360">
    <property type="entry name" value="PP2B"/>
</dbReference>
<dbReference type="InterPro" id="IPR006186">
    <property type="entry name" value="Ser/Thr-sp_prot-phosphatase"/>
</dbReference>
<dbReference type="PANTHER" id="PTHR45673">
    <property type="entry name" value="SERINE/THREONINE-PROTEIN PHOSPHATASE 2B CATALYTIC SUBUNIT 1-RELATED"/>
    <property type="match status" value="1"/>
</dbReference>
<dbReference type="Pfam" id="PF00149">
    <property type="entry name" value="Metallophos"/>
    <property type="match status" value="1"/>
</dbReference>
<dbReference type="PRINTS" id="PR00114">
    <property type="entry name" value="STPHPHTASE"/>
</dbReference>
<dbReference type="SMART" id="SM00156">
    <property type="entry name" value="PP2Ac"/>
    <property type="match status" value="1"/>
</dbReference>
<dbReference type="SUPFAM" id="SSF56300">
    <property type="entry name" value="Metallo-dependent phosphatases"/>
    <property type="match status" value="1"/>
</dbReference>
<dbReference type="PROSITE" id="PS00125">
    <property type="entry name" value="SER_THR_PHOSPHATASE"/>
    <property type="match status" value="1"/>
</dbReference>
<organism>
    <name type="scientific">Schizosaccharomyces pombe (strain 972 / ATCC 24843)</name>
    <name type="common">Fission yeast</name>
    <dbReference type="NCBI Taxonomy" id="284812"/>
    <lineage>
        <taxon>Eukaryota</taxon>
        <taxon>Fungi</taxon>
        <taxon>Dikarya</taxon>
        <taxon>Ascomycota</taxon>
        <taxon>Taphrinomycotina</taxon>
        <taxon>Schizosaccharomycetes</taxon>
        <taxon>Schizosaccharomycetales</taxon>
        <taxon>Schizosaccharomycetaceae</taxon>
        <taxon>Schizosaccharomyces</taxon>
    </lineage>
</organism>